<evidence type="ECO:0000255" key="1">
    <source>
        <dbReference type="HAMAP-Rule" id="MF_01018"/>
    </source>
</evidence>
<gene>
    <name evidence="1" type="primary">hisG</name>
    <name type="ordered locus">EUBELI_01023</name>
</gene>
<comment type="function">
    <text evidence="1">Catalyzes the condensation of ATP and 5-phosphoribose 1-diphosphate to form N'-(5'-phosphoribosyl)-ATP (PR-ATP). Has a crucial role in the pathway because the rate of histidine biosynthesis seems to be controlled primarily by regulation of HisG enzymatic activity.</text>
</comment>
<comment type="catalytic activity">
    <reaction evidence="1">
        <text>1-(5-phospho-beta-D-ribosyl)-ATP + diphosphate = 5-phospho-alpha-D-ribose 1-diphosphate + ATP</text>
        <dbReference type="Rhea" id="RHEA:18473"/>
        <dbReference type="ChEBI" id="CHEBI:30616"/>
        <dbReference type="ChEBI" id="CHEBI:33019"/>
        <dbReference type="ChEBI" id="CHEBI:58017"/>
        <dbReference type="ChEBI" id="CHEBI:73183"/>
        <dbReference type="EC" id="2.4.2.17"/>
    </reaction>
</comment>
<comment type="pathway">
    <text evidence="1">Amino-acid biosynthesis; L-histidine biosynthesis; L-histidine from 5-phospho-alpha-D-ribose 1-diphosphate: step 1/9.</text>
</comment>
<comment type="subunit">
    <text evidence="1">Heteromultimer composed of HisG and HisZ subunits.</text>
</comment>
<comment type="subcellular location">
    <subcellularLocation>
        <location evidence="1">Cytoplasm</location>
    </subcellularLocation>
</comment>
<comment type="domain">
    <text>Lacks the C-terminal regulatory region which is replaced by HisZ.</text>
</comment>
<comment type="similarity">
    <text evidence="1">Belongs to the ATP phosphoribosyltransferase family. Short subfamily.</text>
</comment>
<dbReference type="EC" id="2.4.2.17" evidence="1"/>
<dbReference type="EMBL" id="CP001104">
    <property type="protein sequence ID" value="ACR72024.1"/>
    <property type="molecule type" value="Genomic_DNA"/>
</dbReference>
<dbReference type="RefSeq" id="WP_012739259.1">
    <property type="nucleotide sequence ID" value="NC_012778.1"/>
</dbReference>
<dbReference type="SMR" id="C4Z0B1"/>
<dbReference type="STRING" id="515620.EUBELI_01023"/>
<dbReference type="GeneID" id="41355749"/>
<dbReference type="KEGG" id="eel:EUBELI_01023"/>
<dbReference type="eggNOG" id="COG0040">
    <property type="taxonomic scope" value="Bacteria"/>
</dbReference>
<dbReference type="HOGENOM" id="CLU_038115_2_0_9"/>
<dbReference type="UniPathway" id="UPA00031">
    <property type="reaction ID" value="UER00006"/>
</dbReference>
<dbReference type="Proteomes" id="UP000001476">
    <property type="component" value="Chromosome"/>
</dbReference>
<dbReference type="GO" id="GO:0005737">
    <property type="term" value="C:cytoplasm"/>
    <property type="evidence" value="ECO:0007669"/>
    <property type="project" value="UniProtKB-SubCell"/>
</dbReference>
<dbReference type="GO" id="GO:0005524">
    <property type="term" value="F:ATP binding"/>
    <property type="evidence" value="ECO:0007669"/>
    <property type="project" value="UniProtKB-KW"/>
</dbReference>
<dbReference type="GO" id="GO:0003879">
    <property type="term" value="F:ATP phosphoribosyltransferase activity"/>
    <property type="evidence" value="ECO:0007669"/>
    <property type="project" value="UniProtKB-UniRule"/>
</dbReference>
<dbReference type="GO" id="GO:0000105">
    <property type="term" value="P:L-histidine biosynthetic process"/>
    <property type="evidence" value="ECO:0007669"/>
    <property type="project" value="UniProtKB-UniRule"/>
</dbReference>
<dbReference type="CDD" id="cd13595">
    <property type="entry name" value="PBP2_HisGs"/>
    <property type="match status" value="1"/>
</dbReference>
<dbReference type="FunFam" id="3.40.190.10:FF:000011">
    <property type="entry name" value="ATP phosphoribosyltransferase"/>
    <property type="match status" value="1"/>
</dbReference>
<dbReference type="Gene3D" id="3.40.190.10">
    <property type="entry name" value="Periplasmic binding protein-like II"/>
    <property type="match status" value="2"/>
</dbReference>
<dbReference type="HAMAP" id="MF_01018">
    <property type="entry name" value="HisG_Short"/>
    <property type="match status" value="1"/>
</dbReference>
<dbReference type="InterPro" id="IPR013820">
    <property type="entry name" value="ATP_PRibTrfase_cat"/>
</dbReference>
<dbReference type="InterPro" id="IPR018198">
    <property type="entry name" value="ATP_PRibTrfase_CS"/>
</dbReference>
<dbReference type="InterPro" id="IPR001348">
    <property type="entry name" value="ATP_PRibTrfase_HisG"/>
</dbReference>
<dbReference type="InterPro" id="IPR024893">
    <property type="entry name" value="ATP_PRibTrfase_HisG_short"/>
</dbReference>
<dbReference type="NCBIfam" id="TIGR00070">
    <property type="entry name" value="hisG"/>
    <property type="match status" value="1"/>
</dbReference>
<dbReference type="PANTHER" id="PTHR21403:SF8">
    <property type="entry name" value="ATP PHOSPHORIBOSYLTRANSFERASE"/>
    <property type="match status" value="1"/>
</dbReference>
<dbReference type="PANTHER" id="PTHR21403">
    <property type="entry name" value="ATP PHOSPHORIBOSYLTRANSFERASE ATP-PRTASE"/>
    <property type="match status" value="1"/>
</dbReference>
<dbReference type="Pfam" id="PF01634">
    <property type="entry name" value="HisG"/>
    <property type="match status" value="1"/>
</dbReference>
<dbReference type="SUPFAM" id="SSF53850">
    <property type="entry name" value="Periplasmic binding protein-like II"/>
    <property type="match status" value="1"/>
</dbReference>
<dbReference type="PROSITE" id="PS01316">
    <property type="entry name" value="ATP_P_PHORIBOSYLTR"/>
    <property type="match status" value="1"/>
</dbReference>
<feature type="chain" id="PRO_1000213267" description="ATP phosphoribosyltransferase">
    <location>
        <begin position="1"/>
        <end position="216"/>
    </location>
</feature>
<keyword id="KW-0028">Amino-acid biosynthesis</keyword>
<keyword id="KW-0067">ATP-binding</keyword>
<keyword id="KW-0963">Cytoplasm</keyword>
<keyword id="KW-0328">Glycosyltransferase</keyword>
<keyword id="KW-0368">Histidine biosynthesis</keyword>
<keyword id="KW-0547">Nucleotide-binding</keyword>
<keyword id="KW-1185">Reference proteome</keyword>
<keyword id="KW-0808">Transferase</keyword>
<protein>
    <recommendedName>
        <fullName evidence="1">ATP phosphoribosyltransferase</fullName>
        <shortName evidence="1">ATP-PRT</shortName>
        <shortName evidence="1">ATP-PRTase</shortName>
        <ecNumber evidence="1">2.4.2.17</ecNumber>
    </recommendedName>
</protein>
<organism>
    <name type="scientific">Lachnospira eligens (strain ATCC 27750 / DSM 3376 / VPI C15-48 / C15-B4)</name>
    <name type="common">Eubacterium eligens</name>
    <dbReference type="NCBI Taxonomy" id="515620"/>
    <lineage>
        <taxon>Bacteria</taxon>
        <taxon>Bacillati</taxon>
        <taxon>Bacillota</taxon>
        <taxon>Clostridia</taxon>
        <taxon>Lachnospirales</taxon>
        <taxon>Lachnospiraceae</taxon>
        <taxon>Lachnospira</taxon>
    </lineage>
</organism>
<reference key="1">
    <citation type="journal article" date="2009" name="Proc. Natl. Acad. Sci. U.S.A.">
        <title>Characterizing a model human gut microbiota composed of members of its two dominant bacterial phyla.</title>
        <authorList>
            <person name="Mahowald M.A."/>
            <person name="Rey F.E."/>
            <person name="Seedorf H."/>
            <person name="Turnbaugh P.J."/>
            <person name="Fulton R.S."/>
            <person name="Wollam A."/>
            <person name="Shah N."/>
            <person name="Wang C."/>
            <person name="Magrini V."/>
            <person name="Wilson R.K."/>
            <person name="Cantarel B.L."/>
            <person name="Coutinho P.M."/>
            <person name="Henrissat B."/>
            <person name="Crock L.W."/>
            <person name="Russell A."/>
            <person name="Verberkmoes N.C."/>
            <person name="Hettich R.L."/>
            <person name="Gordon J.I."/>
        </authorList>
    </citation>
    <scope>NUCLEOTIDE SEQUENCE [LARGE SCALE GENOMIC DNA]</scope>
    <source>
        <strain>ATCC 27750 / DSM 3376 / VPI C15-48 / C15-B4</strain>
    </source>
</reference>
<sequence>MRYITIALAKGRLAKKAMEIFEQIGIPCEEMKDEKTRKLIFTNEELGFRFFLSKPSDVPTYVEYGAADIGIVGKDTILEEGRSLYEVYDLQMGKCRMCVCGPESAREKLQHHELIRVASKYPNIAKDYFNNIKHQTVEIIKLNGSVELAPIVGLAEVIVDIVETGATLRENGLEVLEEVCPLSARMVVNQVSMKMEQERINKLINDVKKYIETQGR</sequence>
<proteinExistence type="inferred from homology"/>
<name>HIS1_LACE2</name>
<accession>C4Z0B1</accession>